<proteinExistence type="inferred from homology"/>
<protein>
    <recommendedName>
        <fullName>Protein U58</fullName>
    </recommendedName>
</protein>
<accession>P24437</accession>
<name>UL87_HHV6U</name>
<dbReference type="EMBL" id="M68963">
    <property type="protein sequence ID" value="AAA65568.1"/>
    <property type="molecule type" value="Genomic_DNA"/>
</dbReference>
<dbReference type="EMBL" id="X83413">
    <property type="protein sequence ID" value="CAA58350.2"/>
    <property type="molecule type" value="Genomic_DNA"/>
</dbReference>
<dbReference type="PIR" id="F33560">
    <property type="entry name" value="F33560"/>
</dbReference>
<dbReference type="RefSeq" id="NP_042951.1">
    <property type="nucleotide sequence ID" value="NC_001664.2"/>
</dbReference>
<dbReference type="DNASU" id="1487940"/>
<dbReference type="GeneID" id="1487940"/>
<dbReference type="KEGG" id="vg:1487940"/>
<dbReference type="Proteomes" id="UP000009295">
    <property type="component" value="Segment"/>
</dbReference>
<dbReference type="InterPro" id="IPR004285">
    <property type="entry name" value="Herpes_UL87_C"/>
</dbReference>
<dbReference type="InterPro" id="IPR007618">
    <property type="entry name" value="Herpes_UL87_N"/>
</dbReference>
<dbReference type="Pfam" id="PF04532">
    <property type="entry name" value="DUF587"/>
    <property type="match status" value="1"/>
</dbReference>
<dbReference type="Pfam" id="PF03043">
    <property type="entry name" value="Herpes_UL87"/>
    <property type="match status" value="1"/>
</dbReference>
<sequence>MQHTGNCETLIVNSCFGSTCARSIPVFIDSCDLTAEVSRDEETRLARSMPVVLEKIESIIEKIFQTSGPNIVHDKDRAKIALCRLLLGPVAVPCFCEEWDTNDYLSKSGCKCIGPILYIHTSRCRCSDIPVFKFSIMKDYYASHVFRGLLSLKEWNTHLPNVLCTCELSMSDRYVATVYPKQNSIYLEYYPYFLCYLCRHLTVIEIEQCTNDLISLLGPKVAQRVIIHFKLLFGFRHKPHIGTVDSWFWENFFMLELHKLWLTVVKHNRVTTDFFNVVYEKIQNYKQYAIKTLRMSSKAVPAIQRLCLAKFKQQLLYLNIKVTVKKNKREMCLNGFVYGKTLYVVESSQLIFRNLLLLYYDYSLPDECKTNEENVLTAHYIRVISRLSFKRSRSALPPGVRPDFIFVAQQPKRKELPNVPGGIDFAEITSVRHGAVTLNAFNTNKVMNLKATISKRANFVYHRIPKTMTHSFVMYKHTFKEPAFTVSTFVSNDDLDMSSLNINIRGPYCDFLYALGVYKMHVSIRDLFLPAFVCNSNNSVDLQGLENQDVVRNRKKKVYWITNFPCMISNANKVNVGWFKAGTGIIPRVSGEDLQNVLLQELNNVREIPGLVFDMDLHQLLVLLEQRNLHQIPFLVKQFLIFLRLGLLMGYGHSRRNKVHDIMLHLISNGLFDFNKNSVANTKIKHGCALVGTRLANNVPKIIARQKKMKLDHMGRNANSLAVLRFIVKSGEQKNKTVFIKLLEYLAETSTAINTRNEVARLLQTLTAKVKT</sequence>
<comment type="similarity">
    <text evidence="2">Belongs to the herpesviridae UL87 family.</text>
</comment>
<feature type="chain" id="PRO_0000116227" description="Protein U58">
    <location>
        <begin position="1"/>
        <end position="772"/>
    </location>
</feature>
<feature type="sequence variant" evidence="1">
    <original>M</original>
    <variation>V</variation>
    <location>
        <position position="49"/>
    </location>
</feature>
<organismHost>
    <name type="scientific">Homo sapiens</name>
    <name type="common">Human</name>
    <dbReference type="NCBI Taxonomy" id="9606"/>
</organismHost>
<evidence type="ECO:0000269" key="1">
    <source>
    </source>
</evidence>
<evidence type="ECO:0000305" key="2"/>
<reference key="1">
    <citation type="journal article" date="1990" name="J. Virol.">
        <title>Human herpesvirus 6 is closely related to human cytomegalovirus.</title>
        <authorList>
            <person name="Lawrence G.L."/>
            <person name="Chee M."/>
            <person name="Craxton M.A."/>
            <person name="Gompels U.A."/>
            <person name="Honess R.W."/>
            <person name="Barrell B.G."/>
        </authorList>
    </citation>
    <scope>NUCLEOTIDE SEQUENCE [GENOMIC DNA]</scope>
</reference>
<reference key="2">
    <citation type="journal article" date="1995" name="Virology">
        <title>The DNA sequence of human herpesvirus-6: structure, coding content, and genome evolution.</title>
        <authorList>
            <person name="Gompels U.A."/>
            <person name="Nicholas J."/>
            <person name="Lawrence G.L."/>
            <person name="Jones M."/>
            <person name="Thomson B.J."/>
            <person name="Martin M.E.D."/>
            <person name="Efstathiou S."/>
            <person name="Craxton M.A."/>
            <person name="Macaulay H.A."/>
        </authorList>
    </citation>
    <scope>NUCLEOTIDE SEQUENCE [LARGE SCALE GENOMIC DNA]</scope>
</reference>
<reference key="3">
    <citation type="journal article" date="2017" name="Viruses">
        <title>Analyses of Tissue Culture Adaptation of Human Herpesvirus-6A by Whole Genome Deep Sequencing Redefines the Reference Sequence and Identifies Virus Entry Complex Changes.</title>
        <authorList>
            <person name="Tweedy J.G."/>
            <person name="Escriva E."/>
            <person name="Topf M."/>
            <person name="Gompels U.A."/>
        </authorList>
    </citation>
    <scope>VARIANT VAL-49</scope>
</reference>
<keyword id="KW-1185">Reference proteome</keyword>
<gene>
    <name type="primary">U58</name>
    <name type="synonym">5R</name>
</gene>
<organism>
    <name type="scientific">Human herpesvirus 6A (strain Uganda-1102)</name>
    <name type="common">HHV-6 variant A</name>
    <name type="synonym">Human B lymphotropic virus</name>
    <dbReference type="NCBI Taxonomy" id="10370"/>
    <lineage>
        <taxon>Viruses</taxon>
        <taxon>Duplodnaviria</taxon>
        <taxon>Heunggongvirae</taxon>
        <taxon>Peploviricota</taxon>
        <taxon>Herviviricetes</taxon>
        <taxon>Herpesvirales</taxon>
        <taxon>Orthoherpesviridae</taxon>
        <taxon>Betaherpesvirinae</taxon>
        <taxon>Roseolovirus</taxon>
        <taxon>Roseolovirus humanbeta6a</taxon>
        <taxon>Human betaherpesvirus 6A</taxon>
    </lineage>
</organism>